<sequence length="121" mass="13675">NLYQFGEMISKKTGTFGLFSYVYYGCYCGLGGKGKPLDATDRCCFVHDCCYGRVNGCNPKLSIYSYSFQNGDIVCGDEEDCLRDVCECDRVAAICFGENMNTYNKKYVLYSFKECNESDQC</sequence>
<dbReference type="EC" id="3.1.1.4"/>
<dbReference type="PIR" id="S17861">
    <property type="entry name" value="S17861"/>
</dbReference>
<dbReference type="SMR" id="P24294"/>
<dbReference type="GO" id="GO:0005576">
    <property type="term" value="C:extracellular region"/>
    <property type="evidence" value="ECO:0007669"/>
    <property type="project" value="UniProtKB-SubCell"/>
</dbReference>
<dbReference type="GO" id="GO:0005509">
    <property type="term" value="F:calcium ion binding"/>
    <property type="evidence" value="ECO:0007669"/>
    <property type="project" value="InterPro"/>
</dbReference>
<dbReference type="GO" id="GO:0047498">
    <property type="term" value="F:calcium-dependent phospholipase A2 activity"/>
    <property type="evidence" value="ECO:0007669"/>
    <property type="project" value="TreeGrafter"/>
</dbReference>
<dbReference type="GO" id="GO:0005543">
    <property type="term" value="F:phospholipid binding"/>
    <property type="evidence" value="ECO:0007669"/>
    <property type="project" value="TreeGrafter"/>
</dbReference>
<dbReference type="GO" id="GO:0050482">
    <property type="term" value="P:arachidonate secretion"/>
    <property type="evidence" value="ECO:0007669"/>
    <property type="project" value="InterPro"/>
</dbReference>
<dbReference type="GO" id="GO:0016042">
    <property type="term" value="P:lipid catabolic process"/>
    <property type="evidence" value="ECO:0007669"/>
    <property type="project" value="UniProtKB-KW"/>
</dbReference>
<dbReference type="GO" id="GO:0006644">
    <property type="term" value="P:phospholipid metabolic process"/>
    <property type="evidence" value="ECO:0007669"/>
    <property type="project" value="InterPro"/>
</dbReference>
<dbReference type="CDD" id="cd00125">
    <property type="entry name" value="PLA2c"/>
    <property type="match status" value="1"/>
</dbReference>
<dbReference type="FunFam" id="1.20.90.10:FF:000001">
    <property type="entry name" value="Basic phospholipase A2 homolog"/>
    <property type="match status" value="1"/>
</dbReference>
<dbReference type="Gene3D" id="1.20.90.10">
    <property type="entry name" value="Phospholipase A2 domain"/>
    <property type="match status" value="1"/>
</dbReference>
<dbReference type="InterPro" id="IPR001211">
    <property type="entry name" value="PLipase_A2"/>
</dbReference>
<dbReference type="InterPro" id="IPR033112">
    <property type="entry name" value="PLipase_A2_Asp_AS"/>
</dbReference>
<dbReference type="InterPro" id="IPR016090">
    <property type="entry name" value="PLipase_A2_dom"/>
</dbReference>
<dbReference type="InterPro" id="IPR036444">
    <property type="entry name" value="PLipase_A2_dom_sf"/>
</dbReference>
<dbReference type="InterPro" id="IPR033113">
    <property type="entry name" value="PLipase_A2_His_AS"/>
</dbReference>
<dbReference type="PANTHER" id="PTHR11716:SF101">
    <property type="entry name" value="BASIC PHOSPHOLIPASE A2 PA-11-LIKE"/>
    <property type="match status" value="1"/>
</dbReference>
<dbReference type="PANTHER" id="PTHR11716">
    <property type="entry name" value="PHOSPHOLIPASE A2 FAMILY MEMBER"/>
    <property type="match status" value="1"/>
</dbReference>
<dbReference type="Pfam" id="PF00068">
    <property type="entry name" value="Phospholip_A2_1"/>
    <property type="match status" value="1"/>
</dbReference>
<dbReference type="PRINTS" id="PR00389">
    <property type="entry name" value="PHPHLIPASEA2"/>
</dbReference>
<dbReference type="SMART" id="SM00085">
    <property type="entry name" value="PA2c"/>
    <property type="match status" value="1"/>
</dbReference>
<dbReference type="SUPFAM" id="SSF48619">
    <property type="entry name" value="Phospholipase A2, PLA2"/>
    <property type="match status" value="1"/>
</dbReference>
<dbReference type="PROSITE" id="PS00119">
    <property type="entry name" value="PA2_ASP"/>
    <property type="match status" value="1"/>
</dbReference>
<dbReference type="PROSITE" id="PS00118">
    <property type="entry name" value="PA2_HIS"/>
    <property type="match status" value="1"/>
</dbReference>
<evidence type="ECO:0000250" key="1"/>
<evidence type="ECO:0000255" key="2">
    <source>
        <dbReference type="PROSITE-ProRule" id="PRU10035"/>
    </source>
</evidence>
<evidence type="ECO:0000255" key="3">
    <source>
        <dbReference type="PROSITE-ProRule" id="PRU10036"/>
    </source>
</evidence>
<evidence type="ECO:0000305" key="4"/>
<proteinExistence type="evidence at protein level"/>
<comment type="function">
    <text>PLA2 catalyzes the calcium-dependent hydrolysis of the 2-acyl groups in 3-sn-phosphoglycerides.</text>
</comment>
<comment type="catalytic activity">
    <reaction evidence="2 3">
        <text>a 1,2-diacyl-sn-glycero-3-phosphocholine + H2O = a 1-acyl-sn-glycero-3-phosphocholine + a fatty acid + H(+)</text>
        <dbReference type="Rhea" id="RHEA:15801"/>
        <dbReference type="ChEBI" id="CHEBI:15377"/>
        <dbReference type="ChEBI" id="CHEBI:15378"/>
        <dbReference type="ChEBI" id="CHEBI:28868"/>
        <dbReference type="ChEBI" id="CHEBI:57643"/>
        <dbReference type="ChEBI" id="CHEBI:58168"/>
        <dbReference type="EC" id="3.1.1.4"/>
    </reaction>
</comment>
<comment type="cofactor">
    <cofactor evidence="1">
        <name>Ca(2+)</name>
        <dbReference type="ChEBI" id="CHEBI:29108"/>
    </cofactor>
    <text evidence="1">Binds 1 Ca(2+) ion.</text>
</comment>
<comment type="subcellular location">
    <subcellularLocation>
        <location>Secreted</location>
    </subcellularLocation>
</comment>
<comment type="tissue specificity">
    <text>Expressed by the venom gland.</text>
</comment>
<comment type="similarity">
    <text evidence="4">Belongs to the phospholipase A2 family. Group II subfamily. D49 sub-subfamily.</text>
</comment>
<feature type="chain" id="PRO_0000161646" description="Acidic phospholipase A2 PLA-2">
    <location>
        <begin position="1"/>
        <end position="121"/>
    </location>
</feature>
<feature type="active site" evidence="1">
    <location>
        <position position="47"/>
    </location>
</feature>
<feature type="active site" evidence="1">
    <location>
        <position position="89"/>
    </location>
</feature>
<feature type="binding site" evidence="1">
    <location>
        <position position="27"/>
    </location>
    <ligand>
        <name>Ca(2+)</name>
        <dbReference type="ChEBI" id="CHEBI:29108"/>
    </ligand>
</feature>
<feature type="binding site" evidence="1">
    <location>
        <position position="29"/>
    </location>
    <ligand>
        <name>Ca(2+)</name>
        <dbReference type="ChEBI" id="CHEBI:29108"/>
    </ligand>
</feature>
<feature type="binding site" evidence="1">
    <location>
        <position position="31"/>
    </location>
    <ligand>
        <name>Ca(2+)</name>
        <dbReference type="ChEBI" id="CHEBI:29108"/>
    </ligand>
</feature>
<feature type="binding site" evidence="1">
    <location>
        <position position="48"/>
    </location>
    <ligand>
        <name>Ca(2+)</name>
        <dbReference type="ChEBI" id="CHEBI:29108"/>
    </ligand>
</feature>
<feature type="disulfide bond" evidence="1">
    <location>
        <begin position="26"/>
        <end position="115"/>
    </location>
</feature>
<feature type="disulfide bond" evidence="1">
    <location>
        <begin position="28"/>
        <end position="44"/>
    </location>
</feature>
<feature type="disulfide bond" evidence="1">
    <location>
        <begin position="43"/>
        <end position="95"/>
    </location>
</feature>
<feature type="disulfide bond" evidence="1">
    <location>
        <begin position="49"/>
        <end position="121"/>
    </location>
</feature>
<feature type="disulfide bond" evidence="1">
    <location>
        <begin position="50"/>
        <end position="88"/>
    </location>
</feature>
<feature type="disulfide bond" evidence="1">
    <location>
        <begin position="57"/>
        <end position="81"/>
    </location>
</feature>
<feature type="disulfide bond" evidence="1">
    <location>
        <begin position="75"/>
        <end position="86"/>
    </location>
</feature>
<organism>
    <name type="scientific">Eristicophis macmahoni</name>
    <name type="common">Leaf-nosed viper</name>
    <dbReference type="NCBI Taxonomy" id="110227"/>
    <lineage>
        <taxon>Eukaryota</taxon>
        <taxon>Metazoa</taxon>
        <taxon>Chordata</taxon>
        <taxon>Craniata</taxon>
        <taxon>Vertebrata</taxon>
        <taxon>Euteleostomi</taxon>
        <taxon>Lepidosauria</taxon>
        <taxon>Squamata</taxon>
        <taxon>Bifurcata</taxon>
        <taxon>Unidentata</taxon>
        <taxon>Episquamata</taxon>
        <taxon>Toxicofera</taxon>
        <taxon>Serpentes</taxon>
        <taxon>Colubroidea</taxon>
        <taxon>Viperidae</taxon>
        <taxon>Viperinae</taxon>
        <taxon>Eristicophis</taxon>
    </lineage>
</organism>
<accession>P24294</accession>
<name>PA2A2_ERIMA</name>
<protein>
    <recommendedName>
        <fullName>Acidic phospholipase A2 PLA-2</fullName>
        <shortName>svPLA2</shortName>
        <ecNumber>3.1.1.4</ecNumber>
    </recommendedName>
    <alternativeName>
        <fullName>Phosphatidylcholine 2-acylhydrolase</fullName>
    </alternativeName>
</protein>
<reference key="1">
    <citation type="journal article" date="1991" name="Eur. J. Biochem.">
        <title>Purification and characterization of two highly different group II phospholipase A2 isozymes from a single viperid (Eristocophis macmahoni) venom.</title>
        <authorList>
            <person name="Siddiqi A.R."/>
            <person name="Zaidi Z.H."/>
            <person name="Joernvall H."/>
        </authorList>
    </citation>
    <scope>PROTEIN SEQUENCE</scope>
    <source>
        <tissue>Venom</tissue>
    </source>
</reference>
<keyword id="KW-0106">Calcium</keyword>
<keyword id="KW-0903">Direct protein sequencing</keyword>
<keyword id="KW-1015">Disulfide bond</keyword>
<keyword id="KW-0378">Hydrolase</keyword>
<keyword id="KW-0442">Lipid degradation</keyword>
<keyword id="KW-0443">Lipid metabolism</keyword>
<keyword id="KW-0479">Metal-binding</keyword>
<keyword id="KW-0964">Secreted</keyword>